<reference key="1">
    <citation type="journal article" date="2009" name="Nat. Genet.">
        <title>Comparative genomic and phylogeographic analysis of Mycobacterium leprae.</title>
        <authorList>
            <person name="Monot M."/>
            <person name="Honore N."/>
            <person name="Garnier T."/>
            <person name="Zidane N."/>
            <person name="Sherafi D."/>
            <person name="Paniz-Mondolfi A."/>
            <person name="Matsuoka M."/>
            <person name="Taylor G.M."/>
            <person name="Donoghue H.D."/>
            <person name="Bouwman A."/>
            <person name="Mays S."/>
            <person name="Watson C."/>
            <person name="Lockwood D."/>
            <person name="Khamispour A."/>
            <person name="Dowlati Y."/>
            <person name="Jianping S."/>
            <person name="Rea T.H."/>
            <person name="Vera-Cabrera L."/>
            <person name="Stefani M.M."/>
            <person name="Banu S."/>
            <person name="Macdonald M."/>
            <person name="Sapkota B.R."/>
            <person name="Spencer J.S."/>
            <person name="Thomas J."/>
            <person name="Harshman K."/>
            <person name="Singh P."/>
            <person name="Busso P."/>
            <person name="Gattiker A."/>
            <person name="Rougemont J."/>
            <person name="Brennan P.J."/>
            <person name="Cole S.T."/>
        </authorList>
    </citation>
    <scope>NUCLEOTIDE SEQUENCE [LARGE SCALE GENOMIC DNA]</scope>
    <source>
        <strain>Br4923</strain>
    </source>
</reference>
<keyword id="KW-0066">ATP synthesis</keyword>
<keyword id="KW-0067">ATP-binding</keyword>
<keyword id="KW-1003">Cell membrane</keyword>
<keyword id="KW-0139">CF(1)</keyword>
<keyword id="KW-0375">Hydrogen ion transport</keyword>
<keyword id="KW-0406">Ion transport</keyword>
<keyword id="KW-0472">Membrane</keyword>
<keyword id="KW-0547">Nucleotide-binding</keyword>
<keyword id="KW-1278">Translocase</keyword>
<keyword id="KW-0813">Transport</keyword>
<name>ATPA_MYCLB</name>
<protein>
    <recommendedName>
        <fullName evidence="1">ATP synthase subunit alpha</fullName>
        <ecNumber evidence="1">7.1.2.2</ecNumber>
    </recommendedName>
    <alternativeName>
        <fullName evidence="1">ATP synthase F1 sector subunit alpha</fullName>
    </alternativeName>
    <alternativeName>
        <fullName evidence="1">F-ATPase subunit alpha</fullName>
    </alternativeName>
</protein>
<sequence>MAELTISADDIQNAIEEYVSSFTADTFREEVGTVVDVGDSIAHVEGLPSVMTQELLEFPGGILGVALNLDEHNVGAVILGDFENIKEGQKVKRTGDVLSVPVGEAFMGRVVNPLGQPIDGRGDIEAEARRALELQAPSVVQRQSVKEPLQTGIKAIDAMTPIGRGQRQLVIGDRKTGKTAVCVDTILNQRQNWESGDPKRQVRCVYVAIGQKGTTIASVRRALEEGGAMDYTTIVAALASDSAGFKWLAPYTGSAIAQHWMYDGKHVLIVFDDLTKQAEAYRAISLLLRRPPGREAYPGDVFYLHSRLLERCAKLADHLGGGSLTGLPIIETKANDISAYIPTNVISITDGQCFLETDLFNQGVRPAINVGVSVSRVGGAAQIKAMKEVAGSLRLDLSQYRELEAFAAFASDLDATSKAQLERGARLVELLKQPQYQPMPVEEQVISLFLGTGGHLDSVPVGDVRRFETELLDHIRVAQEEILTEIRESQKLTDEAADSLTEVIKSFKKGFAATGGASVVPNEHVAALDEEKLDKESVKVHQAIPAKTSEKSKNSTPR</sequence>
<feature type="chain" id="PRO_1000166549" description="ATP synthase subunit alpha">
    <location>
        <begin position="1"/>
        <end position="558"/>
    </location>
</feature>
<feature type="region of interest" description="Disordered" evidence="2">
    <location>
        <begin position="536"/>
        <end position="558"/>
    </location>
</feature>
<feature type="compositionally biased region" description="Basic and acidic residues" evidence="2">
    <location>
        <begin position="548"/>
        <end position="558"/>
    </location>
</feature>
<feature type="binding site" evidence="1">
    <location>
        <begin position="172"/>
        <end position="179"/>
    </location>
    <ligand>
        <name>ATP</name>
        <dbReference type="ChEBI" id="CHEBI:30616"/>
    </ligand>
</feature>
<feature type="site" description="Required for activity" evidence="1">
    <location>
        <position position="373"/>
    </location>
</feature>
<dbReference type="EC" id="7.1.2.2" evidence="1"/>
<dbReference type="EMBL" id="FM211192">
    <property type="protein sequence ID" value="CAR71238.1"/>
    <property type="molecule type" value="Genomic_DNA"/>
</dbReference>
<dbReference type="SMR" id="B8ZR40"/>
<dbReference type="KEGG" id="mlb:MLBr01143"/>
<dbReference type="HOGENOM" id="CLU_010091_2_1_11"/>
<dbReference type="Proteomes" id="UP000006900">
    <property type="component" value="Chromosome"/>
</dbReference>
<dbReference type="GO" id="GO:0005886">
    <property type="term" value="C:plasma membrane"/>
    <property type="evidence" value="ECO:0007669"/>
    <property type="project" value="UniProtKB-SubCell"/>
</dbReference>
<dbReference type="GO" id="GO:0045259">
    <property type="term" value="C:proton-transporting ATP synthase complex"/>
    <property type="evidence" value="ECO:0007669"/>
    <property type="project" value="UniProtKB-KW"/>
</dbReference>
<dbReference type="GO" id="GO:0043531">
    <property type="term" value="F:ADP binding"/>
    <property type="evidence" value="ECO:0007669"/>
    <property type="project" value="TreeGrafter"/>
</dbReference>
<dbReference type="GO" id="GO:0005524">
    <property type="term" value="F:ATP binding"/>
    <property type="evidence" value="ECO:0007669"/>
    <property type="project" value="UniProtKB-UniRule"/>
</dbReference>
<dbReference type="GO" id="GO:0046933">
    <property type="term" value="F:proton-transporting ATP synthase activity, rotational mechanism"/>
    <property type="evidence" value="ECO:0007669"/>
    <property type="project" value="UniProtKB-UniRule"/>
</dbReference>
<dbReference type="CDD" id="cd18113">
    <property type="entry name" value="ATP-synt_F1_alpha_C"/>
    <property type="match status" value="1"/>
</dbReference>
<dbReference type="CDD" id="cd18116">
    <property type="entry name" value="ATP-synt_F1_alpha_N"/>
    <property type="match status" value="1"/>
</dbReference>
<dbReference type="CDD" id="cd01132">
    <property type="entry name" value="F1-ATPase_alpha_CD"/>
    <property type="match status" value="1"/>
</dbReference>
<dbReference type="FunFam" id="1.20.150.20:FF:000001">
    <property type="entry name" value="ATP synthase subunit alpha"/>
    <property type="match status" value="1"/>
</dbReference>
<dbReference type="FunFam" id="2.40.30.20:FF:000001">
    <property type="entry name" value="ATP synthase subunit alpha"/>
    <property type="match status" value="1"/>
</dbReference>
<dbReference type="FunFam" id="3.40.50.300:FF:000002">
    <property type="entry name" value="ATP synthase subunit alpha"/>
    <property type="match status" value="1"/>
</dbReference>
<dbReference type="Gene3D" id="2.40.30.20">
    <property type="match status" value="1"/>
</dbReference>
<dbReference type="Gene3D" id="1.20.150.20">
    <property type="entry name" value="ATP synthase alpha/beta chain, C-terminal domain"/>
    <property type="match status" value="1"/>
</dbReference>
<dbReference type="Gene3D" id="3.40.50.300">
    <property type="entry name" value="P-loop containing nucleotide triphosphate hydrolases"/>
    <property type="match status" value="1"/>
</dbReference>
<dbReference type="HAMAP" id="MF_01346">
    <property type="entry name" value="ATP_synth_alpha_bact"/>
    <property type="match status" value="1"/>
</dbReference>
<dbReference type="InterPro" id="IPR023366">
    <property type="entry name" value="ATP_synth_asu-like_sf"/>
</dbReference>
<dbReference type="InterPro" id="IPR000793">
    <property type="entry name" value="ATP_synth_asu_C"/>
</dbReference>
<dbReference type="InterPro" id="IPR038376">
    <property type="entry name" value="ATP_synth_asu_C_sf"/>
</dbReference>
<dbReference type="InterPro" id="IPR033732">
    <property type="entry name" value="ATP_synth_F1_a_nt-bd_dom"/>
</dbReference>
<dbReference type="InterPro" id="IPR005294">
    <property type="entry name" value="ATP_synth_F1_asu"/>
</dbReference>
<dbReference type="InterPro" id="IPR020003">
    <property type="entry name" value="ATPase_a/bsu_AS"/>
</dbReference>
<dbReference type="InterPro" id="IPR004100">
    <property type="entry name" value="ATPase_F1/V1/A1_a/bsu_N"/>
</dbReference>
<dbReference type="InterPro" id="IPR036121">
    <property type="entry name" value="ATPase_F1/V1/A1_a/bsu_N_sf"/>
</dbReference>
<dbReference type="InterPro" id="IPR000194">
    <property type="entry name" value="ATPase_F1/V1/A1_a/bsu_nucl-bd"/>
</dbReference>
<dbReference type="InterPro" id="IPR027417">
    <property type="entry name" value="P-loop_NTPase"/>
</dbReference>
<dbReference type="NCBIfam" id="TIGR00962">
    <property type="entry name" value="atpA"/>
    <property type="match status" value="1"/>
</dbReference>
<dbReference type="NCBIfam" id="NF009884">
    <property type="entry name" value="PRK13343.1"/>
    <property type="match status" value="1"/>
</dbReference>
<dbReference type="PANTHER" id="PTHR48082">
    <property type="entry name" value="ATP SYNTHASE SUBUNIT ALPHA, MITOCHONDRIAL"/>
    <property type="match status" value="1"/>
</dbReference>
<dbReference type="PANTHER" id="PTHR48082:SF2">
    <property type="entry name" value="ATP SYNTHASE SUBUNIT ALPHA, MITOCHONDRIAL"/>
    <property type="match status" value="1"/>
</dbReference>
<dbReference type="Pfam" id="PF00006">
    <property type="entry name" value="ATP-synt_ab"/>
    <property type="match status" value="1"/>
</dbReference>
<dbReference type="Pfam" id="PF00306">
    <property type="entry name" value="ATP-synt_ab_C"/>
    <property type="match status" value="1"/>
</dbReference>
<dbReference type="Pfam" id="PF02874">
    <property type="entry name" value="ATP-synt_ab_N"/>
    <property type="match status" value="1"/>
</dbReference>
<dbReference type="PIRSF" id="PIRSF039088">
    <property type="entry name" value="F_ATPase_subunit_alpha"/>
    <property type="match status" value="1"/>
</dbReference>
<dbReference type="SUPFAM" id="SSF47917">
    <property type="entry name" value="C-terminal domain of alpha and beta subunits of F1 ATP synthase"/>
    <property type="match status" value="1"/>
</dbReference>
<dbReference type="SUPFAM" id="SSF50615">
    <property type="entry name" value="N-terminal domain of alpha and beta subunits of F1 ATP synthase"/>
    <property type="match status" value="1"/>
</dbReference>
<dbReference type="SUPFAM" id="SSF52540">
    <property type="entry name" value="P-loop containing nucleoside triphosphate hydrolases"/>
    <property type="match status" value="1"/>
</dbReference>
<dbReference type="PROSITE" id="PS00152">
    <property type="entry name" value="ATPASE_ALPHA_BETA"/>
    <property type="match status" value="1"/>
</dbReference>
<gene>
    <name evidence="1" type="primary">atpA</name>
    <name type="ordered locus">MLBr01143</name>
</gene>
<accession>B8ZR40</accession>
<organism>
    <name type="scientific">Mycobacterium leprae (strain Br4923)</name>
    <dbReference type="NCBI Taxonomy" id="561304"/>
    <lineage>
        <taxon>Bacteria</taxon>
        <taxon>Bacillati</taxon>
        <taxon>Actinomycetota</taxon>
        <taxon>Actinomycetes</taxon>
        <taxon>Mycobacteriales</taxon>
        <taxon>Mycobacteriaceae</taxon>
        <taxon>Mycobacterium</taxon>
    </lineage>
</organism>
<evidence type="ECO:0000255" key="1">
    <source>
        <dbReference type="HAMAP-Rule" id="MF_01346"/>
    </source>
</evidence>
<evidence type="ECO:0000256" key="2">
    <source>
        <dbReference type="SAM" id="MobiDB-lite"/>
    </source>
</evidence>
<proteinExistence type="inferred from homology"/>
<comment type="function">
    <text evidence="1">Produces ATP from ADP in the presence of a proton gradient across the membrane. The alpha chain is a regulatory subunit.</text>
</comment>
<comment type="catalytic activity">
    <reaction evidence="1">
        <text>ATP + H2O + 4 H(+)(in) = ADP + phosphate + 5 H(+)(out)</text>
        <dbReference type="Rhea" id="RHEA:57720"/>
        <dbReference type="ChEBI" id="CHEBI:15377"/>
        <dbReference type="ChEBI" id="CHEBI:15378"/>
        <dbReference type="ChEBI" id="CHEBI:30616"/>
        <dbReference type="ChEBI" id="CHEBI:43474"/>
        <dbReference type="ChEBI" id="CHEBI:456216"/>
        <dbReference type="EC" id="7.1.2.2"/>
    </reaction>
</comment>
<comment type="subunit">
    <text evidence="1">F-type ATPases have 2 components, CF(1) - the catalytic core - and CF(0) - the membrane proton channel. CF(1) has five subunits: alpha(3), beta(3), gamma(1), delta(1), epsilon(1). CF(0) has three main subunits: a(1), b(2) and c(9-12). The alpha and beta chains form an alternating ring which encloses part of the gamma chain. CF(1) is attached to CF(0) by a central stalk formed by the gamma and epsilon chains, while a peripheral stalk is formed by the delta and b chains.</text>
</comment>
<comment type="subcellular location">
    <subcellularLocation>
        <location evidence="1">Cell membrane</location>
        <topology evidence="1">Peripheral membrane protein</topology>
    </subcellularLocation>
</comment>
<comment type="similarity">
    <text evidence="1">Belongs to the ATPase alpha/beta chains family.</text>
</comment>